<comment type="function">
    <text evidence="1">Isomerase that catalyzes the conversion of deoxy-ribose 1-phosphate (dRib-1-P) and ribose 1-phosphate (Rib-1-P) to deoxy-ribose 5-phosphate (dRib-5-P) and ribose 5-phosphate (Rib-5-P), respectively.</text>
</comment>
<comment type="catalytic activity">
    <reaction evidence="1">
        <text>2-deoxy-alpha-D-ribose 1-phosphate = 2-deoxy-D-ribose 5-phosphate</text>
        <dbReference type="Rhea" id="RHEA:27658"/>
        <dbReference type="ChEBI" id="CHEBI:57259"/>
        <dbReference type="ChEBI" id="CHEBI:62877"/>
        <dbReference type="EC" id="5.4.2.7"/>
    </reaction>
</comment>
<comment type="catalytic activity">
    <reaction evidence="1">
        <text>alpha-D-ribose 1-phosphate = D-ribose 5-phosphate</text>
        <dbReference type="Rhea" id="RHEA:18793"/>
        <dbReference type="ChEBI" id="CHEBI:57720"/>
        <dbReference type="ChEBI" id="CHEBI:78346"/>
        <dbReference type="EC" id="5.4.2.7"/>
    </reaction>
</comment>
<comment type="cofactor">
    <cofactor evidence="1">
        <name>Mn(2+)</name>
        <dbReference type="ChEBI" id="CHEBI:29035"/>
    </cofactor>
    <text evidence="1">Binds 2 manganese ions.</text>
</comment>
<comment type="pathway">
    <text evidence="1">Carbohydrate degradation; 2-deoxy-D-ribose 1-phosphate degradation; D-glyceraldehyde 3-phosphate and acetaldehyde from 2-deoxy-alpha-D-ribose 1-phosphate: step 1/2.</text>
</comment>
<comment type="subcellular location">
    <subcellularLocation>
        <location evidence="1">Cytoplasm</location>
    </subcellularLocation>
</comment>
<comment type="similarity">
    <text evidence="1">Belongs to the phosphopentomutase family.</text>
</comment>
<gene>
    <name evidence="1" type="primary">deoB</name>
    <name type="ordered locus">SZO_08080</name>
</gene>
<proteinExistence type="inferred from homology"/>
<name>DEOB_STRS7</name>
<sequence length="403" mass="43948">MSKFNRIHLVVLDSVGIGAAPDADKFFNAGVADTDSDTLGHISETAGLAVPNMAKIGLGHIPRPVPLKTVPAEADPTGYVTKLEEVSLGKDTMTGHWEIMGLNITEPFDTFWDGFPEEIIQKIEAFSGRKVIREANKPYSGTKVIDDFGPRQMETGELIVYTSADPVLQIAAHEEVIPVEELYRICEYARSITLERPALLGRIIARPYIGEPGSFTRTANRRDYAVSPFQDTVLNKLADAGISTYAVGKINDIFNGSGITNDMGHNKSNSHGIDTLIKTLQLPAFTKGLSFTNLVDFDASFGHRRDPEGYRDCLHEFDRRLPEIIANMKDDDLLLITADHGNDPTYAGTDHTREYIPLLAYSASCTGAGVIPQGHFADISATIAENFGVDTAMIGTSFLADLV</sequence>
<reference key="1">
    <citation type="journal article" date="2009" name="PLoS Pathog.">
        <title>Genomic evidence for the evolution of Streptococcus equi: host restriction, increased virulence, and genetic exchange with human pathogens.</title>
        <authorList>
            <person name="Holden M.T.G."/>
            <person name="Heather Z."/>
            <person name="Paillot R."/>
            <person name="Steward K.F."/>
            <person name="Webb K."/>
            <person name="Ainslie F."/>
            <person name="Jourdan T."/>
            <person name="Bason N.C."/>
            <person name="Holroyd N.E."/>
            <person name="Mungall K."/>
            <person name="Quail M.A."/>
            <person name="Sanders M."/>
            <person name="Simmonds M."/>
            <person name="Willey D."/>
            <person name="Brooks K."/>
            <person name="Aanensen D.M."/>
            <person name="Spratt B.G."/>
            <person name="Jolley K.A."/>
            <person name="Maiden M.C.J."/>
            <person name="Kehoe M."/>
            <person name="Chanter N."/>
            <person name="Bentley S.D."/>
            <person name="Robinson C."/>
            <person name="Maskell D.J."/>
            <person name="Parkhill J."/>
            <person name="Waller A.S."/>
        </authorList>
    </citation>
    <scope>NUCLEOTIDE SEQUENCE [LARGE SCALE GENOMIC DNA]</scope>
    <source>
        <strain>H70</strain>
    </source>
</reference>
<dbReference type="EC" id="5.4.2.7" evidence="1"/>
<dbReference type="EMBL" id="FM204884">
    <property type="protein sequence ID" value="CAW98974.1"/>
    <property type="molecule type" value="Genomic_DNA"/>
</dbReference>
<dbReference type="SMR" id="C0ME45"/>
<dbReference type="KEGG" id="seq:SZO_08080"/>
<dbReference type="eggNOG" id="COG1015">
    <property type="taxonomic scope" value="Bacteria"/>
</dbReference>
<dbReference type="HOGENOM" id="CLU_053861_0_0_9"/>
<dbReference type="UniPathway" id="UPA00002">
    <property type="reaction ID" value="UER00467"/>
</dbReference>
<dbReference type="Proteomes" id="UP000001368">
    <property type="component" value="Chromosome"/>
</dbReference>
<dbReference type="GO" id="GO:0005829">
    <property type="term" value="C:cytosol"/>
    <property type="evidence" value="ECO:0007669"/>
    <property type="project" value="TreeGrafter"/>
</dbReference>
<dbReference type="GO" id="GO:0000287">
    <property type="term" value="F:magnesium ion binding"/>
    <property type="evidence" value="ECO:0007669"/>
    <property type="project" value="InterPro"/>
</dbReference>
<dbReference type="GO" id="GO:0030145">
    <property type="term" value="F:manganese ion binding"/>
    <property type="evidence" value="ECO:0007669"/>
    <property type="project" value="UniProtKB-UniRule"/>
</dbReference>
<dbReference type="GO" id="GO:0008973">
    <property type="term" value="F:phosphopentomutase activity"/>
    <property type="evidence" value="ECO:0007669"/>
    <property type="project" value="UniProtKB-UniRule"/>
</dbReference>
<dbReference type="GO" id="GO:0006018">
    <property type="term" value="P:2-deoxyribose 1-phosphate catabolic process"/>
    <property type="evidence" value="ECO:0007669"/>
    <property type="project" value="UniProtKB-UniRule"/>
</dbReference>
<dbReference type="GO" id="GO:0006015">
    <property type="term" value="P:5-phosphoribose 1-diphosphate biosynthetic process"/>
    <property type="evidence" value="ECO:0007669"/>
    <property type="project" value="UniProtKB-UniPathway"/>
</dbReference>
<dbReference type="GO" id="GO:0043094">
    <property type="term" value="P:metabolic compound salvage"/>
    <property type="evidence" value="ECO:0007669"/>
    <property type="project" value="InterPro"/>
</dbReference>
<dbReference type="GO" id="GO:0009117">
    <property type="term" value="P:nucleotide metabolic process"/>
    <property type="evidence" value="ECO:0007669"/>
    <property type="project" value="InterPro"/>
</dbReference>
<dbReference type="CDD" id="cd16009">
    <property type="entry name" value="PPM"/>
    <property type="match status" value="1"/>
</dbReference>
<dbReference type="FunFam" id="3.30.70.1250:FF:000001">
    <property type="entry name" value="Phosphopentomutase"/>
    <property type="match status" value="1"/>
</dbReference>
<dbReference type="Gene3D" id="3.40.720.10">
    <property type="entry name" value="Alkaline Phosphatase, subunit A"/>
    <property type="match status" value="1"/>
</dbReference>
<dbReference type="Gene3D" id="3.30.70.1250">
    <property type="entry name" value="Phosphopentomutase"/>
    <property type="match status" value="1"/>
</dbReference>
<dbReference type="HAMAP" id="MF_00740">
    <property type="entry name" value="Phosphopentomut"/>
    <property type="match status" value="1"/>
</dbReference>
<dbReference type="InterPro" id="IPR017850">
    <property type="entry name" value="Alkaline_phosphatase_core_sf"/>
</dbReference>
<dbReference type="InterPro" id="IPR010045">
    <property type="entry name" value="DeoB"/>
</dbReference>
<dbReference type="InterPro" id="IPR006124">
    <property type="entry name" value="Metalloenzyme"/>
</dbReference>
<dbReference type="InterPro" id="IPR024052">
    <property type="entry name" value="Phosphopentomutase_DeoB_cap_sf"/>
</dbReference>
<dbReference type="NCBIfam" id="TIGR01696">
    <property type="entry name" value="deoB"/>
    <property type="match status" value="1"/>
</dbReference>
<dbReference type="NCBIfam" id="NF003766">
    <property type="entry name" value="PRK05362.1"/>
    <property type="match status" value="1"/>
</dbReference>
<dbReference type="PANTHER" id="PTHR21110">
    <property type="entry name" value="PHOSPHOPENTOMUTASE"/>
    <property type="match status" value="1"/>
</dbReference>
<dbReference type="PANTHER" id="PTHR21110:SF0">
    <property type="entry name" value="PHOSPHOPENTOMUTASE"/>
    <property type="match status" value="1"/>
</dbReference>
<dbReference type="Pfam" id="PF01676">
    <property type="entry name" value="Metalloenzyme"/>
    <property type="match status" value="1"/>
</dbReference>
<dbReference type="PIRSF" id="PIRSF001491">
    <property type="entry name" value="Ppentomutase"/>
    <property type="match status" value="1"/>
</dbReference>
<dbReference type="SUPFAM" id="SSF53649">
    <property type="entry name" value="Alkaline phosphatase-like"/>
    <property type="match status" value="1"/>
</dbReference>
<dbReference type="SUPFAM" id="SSF143856">
    <property type="entry name" value="DeoB insert domain-like"/>
    <property type="match status" value="1"/>
</dbReference>
<accession>C0ME45</accession>
<protein>
    <recommendedName>
        <fullName evidence="1">Phosphopentomutase</fullName>
        <ecNumber evidence="1">5.4.2.7</ecNumber>
    </recommendedName>
    <alternativeName>
        <fullName evidence="1">Phosphodeoxyribomutase</fullName>
    </alternativeName>
</protein>
<keyword id="KW-0963">Cytoplasm</keyword>
<keyword id="KW-0413">Isomerase</keyword>
<keyword id="KW-0464">Manganese</keyword>
<keyword id="KW-0479">Metal-binding</keyword>
<feature type="chain" id="PRO_1000212814" description="Phosphopentomutase">
    <location>
        <begin position="1"/>
        <end position="403"/>
    </location>
</feature>
<feature type="binding site" evidence="1">
    <location>
        <position position="13"/>
    </location>
    <ligand>
        <name>Mn(2+)</name>
        <dbReference type="ChEBI" id="CHEBI:29035"/>
        <label>1</label>
    </ligand>
</feature>
<feature type="binding site" evidence="1">
    <location>
        <position position="298"/>
    </location>
    <ligand>
        <name>Mn(2+)</name>
        <dbReference type="ChEBI" id="CHEBI:29035"/>
        <label>2</label>
    </ligand>
</feature>
<feature type="binding site" evidence="1">
    <location>
        <position position="303"/>
    </location>
    <ligand>
        <name>Mn(2+)</name>
        <dbReference type="ChEBI" id="CHEBI:29035"/>
        <label>2</label>
    </ligand>
</feature>
<feature type="binding site" evidence="1">
    <location>
        <position position="339"/>
    </location>
    <ligand>
        <name>Mn(2+)</name>
        <dbReference type="ChEBI" id="CHEBI:29035"/>
        <label>1</label>
    </ligand>
</feature>
<feature type="binding site" evidence="1">
    <location>
        <position position="340"/>
    </location>
    <ligand>
        <name>Mn(2+)</name>
        <dbReference type="ChEBI" id="CHEBI:29035"/>
        <label>1</label>
    </ligand>
</feature>
<feature type="binding site" evidence="1">
    <location>
        <position position="351"/>
    </location>
    <ligand>
        <name>Mn(2+)</name>
        <dbReference type="ChEBI" id="CHEBI:29035"/>
        <label>2</label>
    </ligand>
</feature>
<evidence type="ECO:0000255" key="1">
    <source>
        <dbReference type="HAMAP-Rule" id="MF_00740"/>
    </source>
</evidence>
<organism>
    <name type="scientific">Streptococcus equi subsp. zooepidemicus (strain H70)</name>
    <dbReference type="NCBI Taxonomy" id="553483"/>
    <lineage>
        <taxon>Bacteria</taxon>
        <taxon>Bacillati</taxon>
        <taxon>Bacillota</taxon>
        <taxon>Bacilli</taxon>
        <taxon>Lactobacillales</taxon>
        <taxon>Streptococcaceae</taxon>
        <taxon>Streptococcus</taxon>
    </lineage>
</organism>